<name>COXX_OCEIH</name>
<organism>
    <name type="scientific">Oceanobacillus iheyensis (strain DSM 14371 / CIP 107618 / JCM 11309 / KCTC 3954 / HTE831)</name>
    <dbReference type="NCBI Taxonomy" id="221109"/>
    <lineage>
        <taxon>Bacteria</taxon>
        <taxon>Bacillati</taxon>
        <taxon>Bacillota</taxon>
        <taxon>Bacilli</taxon>
        <taxon>Bacillales</taxon>
        <taxon>Bacillaceae</taxon>
        <taxon>Oceanobacillus</taxon>
    </lineage>
</organism>
<accession>Q8CXI8</accession>
<keyword id="KW-1003">Cell membrane</keyword>
<keyword id="KW-0350">Heme biosynthesis</keyword>
<keyword id="KW-0472">Membrane</keyword>
<keyword id="KW-1185">Reference proteome</keyword>
<keyword id="KW-0808">Transferase</keyword>
<keyword id="KW-0812">Transmembrane</keyword>
<keyword id="KW-1133">Transmembrane helix</keyword>
<gene>
    <name evidence="1" type="primary">ctaB</name>
    <name type="ordered locus">OB1436</name>
</gene>
<proteinExistence type="inferred from homology"/>
<protein>
    <recommendedName>
        <fullName evidence="1">Protoheme IX farnesyltransferase</fullName>
        <ecNumber evidence="1">2.5.1.141</ecNumber>
    </recommendedName>
    <alternativeName>
        <fullName evidence="1">Heme B farnesyltransferase</fullName>
    </alternativeName>
    <alternativeName>
        <fullName evidence="1">Heme O synthase</fullName>
    </alternativeName>
</protein>
<dbReference type="EC" id="2.5.1.141" evidence="1"/>
<dbReference type="EMBL" id="BA000028">
    <property type="protein sequence ID" value="BAC13392.1"/>
    <property type="molecule type" value="Genomic_DNA"/>
</dbReference>
<dbReference type="SMR" id="Q8CXI8"/>
<dbReference type="STRING" id="221109.gene:10733676"/>
<dbReference type="KEGG" id="oih:OB1436"/>
<dbReference type="eggNOG" id="COG0109">
    <property type="taxonomic scope" value="Bacteria"/>
</dbReference>
<dbReference type="HOGENOM" id="CLU_029631_0_0_9"/>
<dbReference type="OrthoDB" id="9814417at2"/>
<dbReference type="PhylomeDB" id="Q8CXI8"/>
<dbReference type="UniPathway" id="UPA00834">
    <property type="reaction ID" value="UER00712"/>
</dbReference>
<dbReference type="Proteomes" id="UP000000822">
    <property type="component" value="Chromosome"/>
</dbReference>
<dbReference type="GO" id="GO:0005886">
    <property type="term" value="C:plasma membrane"/>
    <property type="evidence" value="ECO:0007669"/>
    <property type="project" value="UniProtKB-SubCell"/>
</dbReference>
<dbReference type="GO" id="GO:0008495">
    <property type="term" value="F:protoheme IX farnesyltransferase activity"/>
    <property type="evidence" value="ECO:0007669"/>
    <property type="project" value="UniProtKB-UniRule"/>
</dbReference>
<dbReference type="GO" id="GO:0048034">
    <property type="term" value="P:heme O biosynthetic process"/>
    <property type="evidence" value="ECO:0007669"/>
    <property type="project" value="UniProtKB-UniRule"/>
</dbReference>
<dbReference type="CDD" id="cd13957">
    <property type="entry name" value="PT_UbiA_Cox10"/>
    <property type="match status" value="1"/>
</dbReference>
<dbReference type="FunFam" id="1.10.357.140:FF:000001">
    <property type="entry name" value="Protoheme IX farnesyltransferase"/>
    <property type="match status" value="1"/>
</dbReference>
<dbReference type="Gene3D" id="1.10.357.140">
    <property type="entry name" value="UbiA prenyltransferase"/>
    <property type="match status" value="1"/>
</dbReference>
<dbReference type="HAMAP" id="MF_00154">
    <property type="entry name" value="CyoE_CtaB"/>
    <property type="match status" value="1"/>
</dbReference>
<dbReference type="InterPro" id="IPR006369">
    <property type="entry name" value="Protohaem_IX_farnesylTrfase"/>
</dbReference>
<dbReference type="InterPro" id="IPR000537">
    <property type="entry name" value="UbiA_prenyltransferase"/>
</dbReference>
<dbReference type="InterPro" id="IPR030470">
    <property type="entry name" value="UbiA_prenylTrfase_CS"/>
</dbReference>
<dbReference type="InterPro" id="IPR044878">
    <property type="entry name" value="UbiA_sf"/>
</dbReference>
<dbReference type="NCBIfam" id="TIGR01473">
    <property type="entry name" value="cyoE_ctaB"/>
    <property type="match status" value="1"/>
</dbReference>
<dbReference type="PANTHER" id="PTHR43448">
    <property type="entry name" value="PROTOHEME IX FARNESYLTRANSFERASE, MITOCHONDRIAL"/>
    <property type="match status" value="1"/>
</dbReference>
<dbReference type="PANTHER" id="PTHR43448:SF2">
    <property type="entry name" value="PROTOHEME IX FARNESYLTRANSFERASE, MITOCHONDRIAL"/>
    <property type="match status" value="1"/>
</dbReference>
<dbReference type="Pfam" id="PF01040">
    <property type="entry name" value="UbiA"/>
    <property type="match status" value="1"/>
</dbReference>
<dbReference type="PROSITE" id="PS00943">
    <property type="entry name" value="UBIA"/>
    <property type="match status" value="1"/>
</dbReference>
<comment type="function">
    <text evidence="1">Converts heme B (protoheme IX) to heme O by substitution of the vinyl group on carbon 2 of heme B porphyrin ring with a hydroxyethyl farnesyl side group.</text>
</comment>
<comment type="catalytic activity">
    <reaction evidence="1">
        <text>heme b + (2E,6E)-farnesyl diphosphate + H2O = Fe(II)-heme o + diphosphate</text>
        <dbReference type="Rhea" id="RHEA:28070"/>
        <dbReference type="ChEBI" id="CHEBI:15377"/>
        <dbReference type="ChEBI" id="CHEBI:33019"/>
        <dbReference type="ChEBI" id="CHEBI:60344"/>
        <dbReference type="ChEBI" id="CHEBI:60530"/>
        <dbReference type="ChEBI" id="CHEBI:175763"/>
        <dbReference type="EC" id="2.5.1.141"/>
    </reaction>
</comment>
<comment type="pathway">
    <text evidence="1">Porphyrin-containing compound metabolism; heme O biosynthesis; heme O from protoheme: step 1/1.</text>
</comment>
<comment type="subunit">
    <text evidence="1">Interacts with CtaA.</text>
</comment>
<comment type="subcellular location">
    <subcellularLocation>
        <location evidence="1">Cell membrane</location>
        <topology evidence="1">Multi-pass membrane protein</topology>
    </subcellularLocation>
</comment>
<comment type="miscellaneous">
    <text evidence="1">Carbon 2 of the heme B porphyrin ring is defined according to the Fischer nomenclature.</text>
</comment>
<comment type="similarity">
    <text evidence="1">Belongs to the UbiA prenyltransferase family. Protoheme IX farnesyltransferase subfamily.</text>
</comment>
<reference key="1">
    <citation type="journal article" date="2002" name="Nucleic Acids Res.">
        <title>Genome sequence of Oceanobacillus iheyensis isolated from the Iheya Ridge and its unexpected adaptive capabilities to extreme environments.</title>
        <authorList>
            <person name="Takami H."/>
            <person name="Takaki Y."/>
            <person name="Uchiyama I."/>
        </authorList>
    </citation>
    <scope>NUCLEOTIDE SEQUENCE [LARGE SCALE GENOMIC DNA]</scope>
    <source>
        <strain>DSM 14371 / CIP 107618 / JCM 11309 / KCTC 3954 / HTE831</strain>
    </source>
</reference>
<evidence type="ECO:0000255" key="1">
    <source>
        <dbReference type="HAMAP-Rule" id="MF_00154"/>
    </source>
</evidence>
<feature type="chain" id="PRO_0000327105" description="Protoheme IX farnesyltransferase">
    <location>
        <begin position="1"/>
        <end position="314"/>
    </location>
</feature>
<feature type="transmembrane region" description="Helical" evidence="1">
    <location>
        <begin position="36"/>
        <end position="56"/>
    </location>
</feature>
<feature type="transmembrane region" description="Helical" evidence="1">
    <location>
        <begin position="65"/>
        <end position="85"/>
    </location>
</feature>
<feature type="transmembrane region" description="Helical" evidence="1">
    <location>
        <begin position="114"/>
        <end position="134"/>
    </location>
</feature>
<feature type="transmembrane region" description="Helical" evidence="1">
    <location>
        <begin position="135"/>
        <end position="155"/>
    </location>
</feature>
<feature type="transmembrane region" description="Helical" evidence="1">
    <location>
        <begin position="179"/>
        <end position="199"/>
    </location>
</feature>
<feature type="transmembrane region" description="Helical" evidence="1">
    <location>
        <begin position="237"/>
        <end position="257"/>
    </location>
</feature>
<feature type="transmembrane region" description="Helical" evidence="1">
    <location>
        <begin position="259"/>
        <end position="279"/>
    </location>
</feature>
<feature type="transmembrane region" description="Helical" evidence="1">
    <location>
        <begin position="290"/>
        <end position="310"/>
    </location>
</feature>
<sequence>MNKVEMTYSELIGNTSISNKQKVVMFTSEIKALIKIGIVNSNLITTIAGFLLAISFTSSSFMSNWGTFLLTIIGTALVIAGGCIVNNWYDVDIDPKMSRTKNRPTVTGFFSLKSVLTFGLLTTAVGLLLLMFTSWYATLFAFIGWFGYVVLYTIWSKRRYTLNTVIGSLSGAMPPLIGWAAISPSFHIVPFVMFLIMFIWQTPHFLALAMKKRDEYEAAGIPMLPVVRGMAVTKRQIIVYIACLLPLPFFLLPTMGITFAVIATLLNLGWLAIAFTGLFVDEDKKWANTIFIFSLNYLIILFPLMIIVKLPIFS</sequence>